<sequence>MTQPPGQPVFIRLGPPPDEPNQFVVEGAPRSYPPDVLARLEVDAKEIIGRYPDRRSALLPLLHLVQGEDSYLTPAGLRFCADQLGLTGAEVSAVASFYTMYRRRPTGEYLVGVCTNTLCAVMGGDAIFDRLKEHLGVGHDETTSDGVVTLQHIECNAACDYAPVVMVNWEFFDNQTPESARELVDSLRSDTPKAPTRGAPLCGFRQTSRILAGLPDQRPDEGQGGPGAPTLAGLQVARKNDMQAPPTPGADE</sequence>
<protein>
    <recommendedName>
        <fullName>NADH-quinone oxidoreductase subunit E</fullName>
        <ecNumber>7.1.1.-</ecNumber>
    </recommendedName>
    <alternativeName>
        <fullName>NADH dehydrogenase I subunit E</fullName>
    </alternativeName>
    <alternativeName>
        <fullName>NDH-1 subunit E</fullName>
    </alternativeName>
</protein>
<name>NUOE_MYCBO</name>
<evidence type="ECO:0000250" key="1"/>
<evidence type="ECO:0000255" key="2"/>
<evidence type="ECO:0000256" key="3">
    <source>
        <dbReference type="SAM" id="MobiDB-lite"/>
    </source>
</evidence>
<evidence type="ECO:0000305" key="4"/>
<keyword id="KW-0001">2Fe-2S</keyword>
<keyword id="KW-0408">Iron</keyword>
<keyword id="KW-0411">Iron-sulfur</keyword>
<keyword id="KW-0479">Metal-binding</keyword>
<keyword id="KW-0520">NAD</keyword>
<keyword id="KW-0874">Quinone</keyword>
<keyword id="KW-1185">Reference proteome</keyword>
<keyword id="KW-1278">Translocase</keyword>
<organism>
    <name type="scientific">Mycobacterium bovis (strain ATCC BAA-935 / AF2122/97)</name>
    <dbReference type="NCBI Taxonomy" id="233413"/>
    <lineage>
        <taxon>Bacteria</taxon>
        <taxon>Bacillati</taxon>
        <taxon>Actinomycetota</taxon>
        <taxon>Actinomycetes</taxon>
        <taxon>Mycobacteriales</taxon>
        <taxon>Mycobacteriaceae</taxon>
        <taxon>Mycobacterium</taxon>
        <taxon>Mycobacterium tuberculosis complex</taxon>
    </lineage>
</organism>
<accession>P65574</accession>
<accession>A0A1R3Y3A2</accession>
<accession>P95177</accession>
<accession>X2BMR1</accession>
<comment type="function">
    <text evidence="1">NDH-1 shuttles electrons from NADH, via FMN and iron-sulfur (Fe-S) centers, to quinones in the respiratory chain. The immediate electron acceptor for the enzyme in this species is believed to be menaquinone. Couples the redox reaction to proton translocation (for every two electrons transferred, four hydrogen ions are translocated across the cytoplasmic membrane), and thus conserves the redox energy in a proton gradient (By similarity).</text>
</comment>
<comment type="catalytic activity">
    <reaction>
        <text>a quinone + NADH + 5 H(+)(in) = a quinol + NAD(+) + 4 H(+)(out)</text>
        <dbReference type="Rhea" id="RHEA:57888"/>
        <dbReference type="ChEBI" id="CHEBI:15378"/>
        <dbReference type="ChEBI" id="CHEBI:24646"/>
        <dbReference type="ChEBI" id="CHEBI:57540"/>
        <dbReference type="ChEBI" id="CHEBI:57945"/>
        <dbReference type="ChEBI" id="CHEBI:132124"/>
    </reaction>
</comment>
<comment type="cofactor">
    <cofactor evidence="4">
        <name>[2Fe-2S] cluster</name>
        <dbReference type="ChEBI" id="CHEBI:190135"/>
    </cofactor>
    <text evidence="4">Binds 1 [2Fe-2S] cluster.</text>
</comment>
<comment type="similarity">
    <text evidence="4">Belongs to the complex I 24 kDa subunit family.</text>
</comment>
<feature type="chain" id="PRO_0000118697" description="NADH-quinone oxidoreductase subunit E">
    <location>
        <begin position="1"/>
        <end position="252"/>
    </location>
</feature>
<feature type="region of interest" description="Disordered" evidence="3">
    <location>
        <begin position="211"/>
        <end position="252"/>
    </location>
</feature>
<feature type="binding site" evidence="2">
    <location>
        <position position="114"/>
    </location>
    <ligand>
        <name>[2Fe-2S] cluster</name>
        <dbReference type="ChEBI" id="CHEBI:190135"/>
    </ligand>
</feature>
<feature type="binding site" evidence="2">
    <location>
        <position position="119"/>
    </location>
    <ligand>
        <name>[2Fe-2S] cluster</name>
        <dbReference type="ChEBI" id="CHEBI:190135"/>
    </ligand>
</feature>
<feature type="binding site" evidence="2">
    <location>
        <position position="155"/>
    </location>
    <ligand>
        <name>[2Fe-2S] cluster</name>
        <dbReference type="ChEBI" id="CHEBI:190135"/>
    </ligand>
</feature>
<feature type="binding site" evidence="2">
    <location>
        <position position="159"/>
    </location>
    <ligand>
        <name>[2Fe-2S] cluster</name>
        <dbReference type="ChEBI" id="CHEBI:190135"/>
    </ligand>
</feature>
<gene>
    <name type="primary">nuoE</name>
    <name type="ordered locus">BQ2027_MB3173</name>
</gene>
<reference key="1">
    <citation type="journal article" date="2003" name="Proc. Natl. Acad. Sci. U.S.A.">
        <title>The complete genome sequence of Mycobacterium bovis.</title>
        <authorList>
            <person name="Garnier T."/>
            <person name="Eiglmeier K."/>
            <person name="Camus J.-C."/>
            <person name="Medina N."/>
            <person name="Mansoor H."/>
            <person name="Pryor M."/>
            <person name="Duthoy S."/>
            <person name="Grondin S."/>
            <person name="Lacroix C."/>
            <person name="Monsempe C."/>
            <person name="Simon S."/>
            <person name="Harris B."/>
            <person name="Atkin R."/>
            <person name="Doggett J."/>
            <person name="Mayes R."/>
            <person name="Keating L."/>
            <person name="Wheeler P.R."/>
            <person name="Parkhill J."/>
            <person name="Barrell B.G."/>
            <person name="Cole S.T."/>
            <person name="Gordon S.V."/>
            <person name="Hewinson R.G."/>
        </authorList>
    </citation>
    <scope>NUCLEOTIDE SEQUENCE [LARGE SCALE GENOMIC DNA]</scope>
    <source>
        <strain>ATCC BAA-935 / AF2122/97</strain>
    </source>
</reference>
<reference key="2">
    <citation type="journal article" date="2017" name="Genome Announc.">
        <title>Updated reference genome sequence and annotation of Mycobacterium bovis AF2122/97.</title>
        <authorList>
            <person name="Malone K.M."/>
            <person name="Farrell D."/>
            <person name="Stuber T.P."/>
            <person name="Schubert O.T."/>
            <person name="Aebersold R."/>
            <person name="Robbe-Austerman S."/>
            <person name="Gordon S.V."/>
        </authorList>
    </citation>
    <scope>NUCLEOTIDE SEQUENCE [LARGE SCALE GENOMIC DNA]</scope>
    <scope>GENOME REANNOTATION</scope>
    <source>
        <strain>ATCC BAA-935 / AF2122/97</strain>
    </source>
</reference>
<dbReference type="EC" id="7.1.1.-"/>
<dbReference type="EMBL" id="LT708304">
    <property type="protein sequence ID" value="SIU01800.1"/>
    <property type="molecule type" value="Genomic_DNA"/>
</dbReference>
<dbReference type="RefSeq" id="NP_856818.1">
    <property type="nucleotide sequence ID" value="NC_002945.3"/>
</dbReference>
<dbReference type="RefSeq" id="WP_003416434.1">
    <property type="nucleotide sequence ID" value="NC_002945.4"/>
</dbReference>
<dbReference type="SMR" id="P65574"/>
<dbReference type="KEGG" id="mbo:BQ2027_MB3173"/>
<dbReference type="PATRIC" id="fig|233413.5.peg.3491"/>
<dbReference type="Proteomes" id="UP000001419">
    <property type="component" value="Chromosome"/>
</dbReference>
<dbReference type="GO" id="GO:0051537">
    <property type="term" value="F:2 iron, 2 sulfur cluster binding"/>
    <property type="evidence" value="ECO:0007669"/>
    <property type="project" value="UniProtKB-KW"/>
</dbReference>
<dbReference type="GO" id="GO:0046872">
    <property type="term" value="F:metal ion binding"/>
    <property type="evidence" value="ECO:0007669"/>
    <property type="project" value="UniProtKB-KW"/>
</dbReference>
<dbReference type="GO" id="GO:0003954">
    <property type="term" value="F:NADH dehydrogenase activity"/>
    <property type="evidence" value="ECO:0007669"/>
    <property type="project" value="TreeGrafter"/>
</dbReference>
<dbReference type="GO" id="GO:0048038">
    <property type="term" value="F:quinone binding"/>
    <property type="evidence" value="ECO:0007669"/>
    <property type="project" value="UniProtKB-KW"/>
</dbReference>
<dbReference type="CDD" id="cd03064">
    <property type="entry name" value="TRX_Fd_NuoE"/>
    <property type="match status" value="1"/>
</dbReference>
<dbReference type="FunFam" id="1.10.10.1590:FF:000001">
    <property type="entry name" value="NADH-quinone oxidoreductase subunit E"/>
    <property type="match status" value="1"/>
</dbReference>
<dbReference type="FunFam" id="3.40.30.10:FF:000057">
    <property type="entry name" value="NADH-quinone oxidoreductase subunit E"/>
    <property type="match status" value="1"/>
</dbReference>
<dbReference type="Gene3D" id="3.40.30.10">
    <property type="entry name" value="Glutaredoxin"/>
    <property type="match status" value="1"/>
</dbReference>
<dbReference type="Gene3D" id="1.10.10.1590">
    <property type="entry name" value="NADH-quinone oxidoreductase subunit E"/>
    <property type="match status" value="1"/>
</dbReference>
<dbReference type="InterPro" id="IPR002023">
    <property type="entry name" value="NuoE-like"/>
</dbReference>
<dbReference type="InterPro" id="IPR042128">
    <property type="entry name" value="NuoE_dom"/>
</dbReference>
<dbReference type="InterPro" id="IPR041921">
    <property type="entry name" value="NuoE_N"/>
</dbReference>
<dbReference type="InterPro" id="IPR036249">
    <property type="entry name" value="Thioredoxin-like_sf"/>
</dbReference>
<dbReference type="NCBIfam" id="NF005721">
    <property type="entry name" value="PRK07539.1-1"/>
    <property type="match status" value="1"/>
</dbReference>
<dbReference type="PANTHER" id="PTHR10371:SF3">
    <property type="entry name" value="NADH DEHYDROGENASE [UBIQUINONE] FLAVOPROTEIN 2, MITOCHONDRIAL"/>
    <property type="match status" value="1"/>
</dbReference>
<dbReference type="PANTHER" id="PTHR10371">
    <property type="entry name" value="NADH DEHYDROGENASE UBIQUINONE FLAVOPROTEIN 2, MITOCHONDRIAL"/>
    <property type="match status" value="1"/>
</dbReference>
<dbReference type="Pfam" id="PF01257">
    <property type="entry name" value="2Fe-2S_thioredx"/>
    <property type="match status" value="1"/>
</dbReference>
<dbReference type="PIRSF" id="PIRSF000216">
    <property type="entry name" value="NADH_DH_24kDa"/>
    <property type="match status" value="1"/>
</dbReference>
<dbReference type="SUPFAM" id="SSF52833">
    <property type="entry name" value="Thioredoxin-like"/>
    <property type="match status" value="1"/>
</dbReference>
<dbReference type="PROSITE" id="PS01099">
    <property type="entry name" value="COMPLEX1_24K"/>
    <property type="match status" value="1"/>
</dbReference>
<proteinExistence type="inferred from homology"/>